<accession>A8GYW5</accession>
<dbReference type="EMBL" id="CP000851">
    <property type="protein sequence ID" value="ABV85502.1"/>
    <property type="molecule type" value="Genomic_DNA"/>
</dbReference>
<dbReference type="RefSeq" id="WP_012153448.1">
    <property type="nucleotide sequence ID" value="NC_009901.1"/>
</dbReference>
<dbReference type="SMR" id="A8GYW5"/>
<dbReference type="STRING" id="398579.Spea_0173"/>
<dbReference type="KEGG" id="spl:Spea_0173"/>
<dbReference type="eggNOG" id="COG0080">
    <property type="taxonomic scope" value="Bacteria"/>
</dbReference>
<dbReference type="HOGENOM" id="CLU_074237_2_0_6"/>
<dbReference type="OrthoDB" id="9802408at2"/>
<dbReference type="Proteomes" id="UP000002608">
    <property type="component" value="Chromosome"/>
</dbReference>
<dbReference type="GO" id="GO:0022625">
    <property type="term" value="C:cytosolic large ribosomal subunit"/>
    <property type="evidence" value="ECO:0007669"/>
    <property type="project" value="TreeGrafter"/>
</dbReference>
<dbReference type="GO" id="GO:0070180">
    <property type="term" value="F:large ribosomal subunit rRNA binding"/>
    <property type="evidence" value="ECO:0007669"/>
    <property type="project" value="UniProtKB-UniRule"/>
</dbReference>
<dbReference type="GO" id="GO:0003735">
    <property type="term" value="F:structural constituent of ribosome"/>
    <property type="evidence" value="ECO:0007669"/>
    <property type="project" value="InterPro"/>
</dbReference>
<dbReference type="GO" id="GO:0006412">
    <property type="term" value="P:translation"/>
    <property type="evidence" value="ECO:0007669"/>
    <property type="project" value="UniProtKB-UniRule"/>
</dbReference>
<dbReference type="CDD" id="cd00349">
    <property type="entry name" value="Ribosomal_L11"/>
    <property type="match status" value="1"/>
</dbReference>
<dbReference type="FunFam" id="1.10.10.250:FF:000001">
    <property type="entry name" value="50S ribosomal protein L11"/>
    <property type="match status" value="1"/>
</dbReference>
<dbReference type="FunFam" id="3.30.1550.10:FF:000001">
    <property type="entry name" value="50S ribosomal protein L11"/>
    <property type="match status" value="1"/>
</dbReference>
<dbReference type="Gene3D" id="1.10.10.250">
    <property type="entry name" value="Ribosomal protein L11, C-terminal domain"/>
    <property type="match status" value="1"/>
</dbReference>
<dbReference type="Gene3D" id="3.30.1550.10">
    <property type="entry name" value="Ribosomal protein L11/L12, N-terminal domain"/>
    <property type="match status" value="1"/>
</dbReference>
<dbReference type="HAMAP" id="MF_00736">
    <property type="entry name" value="Ribosomal_uL11"/>
    <property type="match status" value="1"/>
</dbReference>
<dbReference type="InterPro" id="IPR000911">
    <property type="entry name" value="Ribosomal_uL11"/>
</dbReference>
<dbReference type="InterPro" id="IPR006519">
    <property type="entry name" value="Ribosomal_uL11_bac-typ"/>
</dbReference>
<dbReference type="InterPro" id="IPR020783">
    <property type="entry name" value="Ribosomal_uL11_C"/>
</dbReference>
<dbReference type="InterPro" id="IPR036769">
    <property type="entry name" value="Ribosomal_uL11_C_sf"/>
</dbReference>
<dbReference type="InterPro" id="IPR020785">
    <property type="entry name" value="Ribosomal_uL11_CS"/>
</dbReference>
<dbReference type="InterPro" id="IPR020784">
    <property type="entry name" value="Ribosomal_uL11_N"/>
</dbReference>
<dbReference type="InterPro" id="IPR036796">
    <property type="entry name" value="Ribosomal_uL11_N_sf"/>
</dbReference>
<dbReference type="NCBIfam" id="TIGR01632">
    <property type="entry name" value="L11_bact"/>
    <property type="match status" value="1"/>
</dbReference>
<dbReference type="PANTHER" id="PTHR11661">
    <property type="entry name" value="60S RIBOSOMAL PROTEIN L12"/>
    <property type="match status" value="1"/>
</dbReference>
<dbReference type="PANTHER" id="PTHR11661:SF1">
    <property type="entry name" value="LARGE RIBOSOMAL SUBUNIT PROTEIN UL11M"/>
    <property type="match status" value="1"/>
</dbReference>
<dbReference type="Pfam" id="PF00298">
    <property type="entry name" value="Ribosomal_L11"/>
    <property type="match status" value="1"/>
</dbReference>
<dbReference type="Pfam" id="PF03946">
    <property type="entry name" value="Ribosomal_L11_N"/>
    <property type="match status" value="1"/>
</dbReference>
<dbReference type="SMART" id="SM00649">
    <property type="entry name" value="RL11"/>
    <property type="match status" value="1"/>
</dbReference>
<dbReference type="SUPFAM" id="SSF54747">
    <property type="entry name" value="Ribosomal L11/L12e N-terminal domain"/>
    <property type="match status" value="1"/>
</dbReference>
<dbReference type="SUPFAM" id="SSF46906">
    <property type="entry name" value="Ribosomal protein L11, C-terminal domain"/>
    <property type="match status" value="1"/>
</dbReference>
<dbReference type="PROSITE" id="PS00359">
    <property type="entry name" value="RIBOSOMAL_L11"/>
    <property type="match status" value="1"/>
</dbReference>
<sequence length="142" mass="15007">MAKKVDGYIKLQVAAGAANPSPPVGPALGQKGVNIMEFCKAFNARTEKFEKGMPIPVVITVYSDRSFTFETKTPPASFLLLKAAGLKSGSGRPNTEKVGTIKRSAVQEIAETKAADMTGADIEAMTRSIEGTARSMGLVVED</sequence>
<proteinExistence type="inferred from homology"/>
<protein>
    <recommendedName>
        <fullName evidence="1">Large ribosomal subunit protein uL11</fullName>
    </recommendedName>
    <alternativeName>
        <fullName evidence="2">50S ribosomal protein L11</fullName>
    </alternativeName>
</protein>
<gene>
    <name evidence="1" type="primary">rplK</name>
    <name type="ordered locus">Spea_0173</name>
</gene>
<evidence type="ECO:0000255" key="1">
    <source>
        <dbReference type="HAMAP-Rule" id="MF_00736"/>
    </source>
</evidence>
<evidence type="ECO:0000305" key="2"/>
<keyword id="KW-0488">Methylation</keyword>
<keyword id="KW-1185">Reference proteome</keyword>
<keyword id="KW-0687">Ribonucleoprotein</keyword>
<keyword id="KW-0689">Ribosomal protein</keyword>
<keyword id="KW-0694">RNA-binding</keyword>
<keyword id="KW-0699">rRNA-binding</keyword>
<name>RL11_SHEPA</name>
<comment type="function">
    <text evidence="1">Forms part of the ribosomal stalk which helps the ribosome interact with GTP-bound translation factors.</text>
</comment>
<comment type="subunit">
    <text evidence="1">Part of the ribosomal stalk of the 50S ribosomal subunit. Interacts with L10 and the large rRNA to form the base of the stalk. L10 forms an elongated spine to which L12 dimers bind in a sequential fashion forming a multimeric L10(L12)X complex.</text>
</comment>
<comment type="PTM">
    <text evidence="1">One or more lysine residues are methylated.</text>
</comment>
<comment type="similarity">
    <text evidence="1">Belongs to the universal ribosomal protein uL11 family.</text>
</comment>
<feature type="chain" id="PRO_1000083405" description="Large ribosomal subunit protein uL11">
    <location>
        <begin position="1"/>
        <end position="142"/>
    </location>
</feature>
<reference key="1">
    <citation type="submission" date="2007-10" db="EMBL/GenBank/DDBJ databases">
        <title>Complete sequence of Shewanella pealeana ATCC 700345.</title>
        <authorList>
            <consortium name="US DOE Joint Genome Institute"/>
            <person name="Copeland A."/>
            <person name="Lucas S."/>
            <person name="Lapidus A."/>
            <person name="Barry K."/>
            <person name="Glavina del Rio T."/>
            <person name="Dalin E."/>
            <person name="Tice H."/>
            <person name="Pitluck S."/>
            <person name="Chertkov O."/>
            <person name="Brettin T."/>
            <person name="Bruce D."/>
            <person name="Detter J.C."/>
            <person name="Han C."/>
            <person name="Schmutz J."/>
            <person name="Larimer F."/>
            <person name="Land M."/>
            <person name="Hauser L."/>
            <person name="Kyrpides N."/>
            <person name="Kim E."/>
            <person name="Zhao J.-S.Z."/>
            <person name="Manno D."/>
            <person name="Hawari J."/>
            <person name="Richardson P."/>
        </authorList>
    </citation>
    <scope>NUCLEOTIDE SEQUENCE [LARGE SCALE GENOMIC DNA]</scope>
    <source>
        <strain>ATCC 700345 / ANG-SQ1</strain>
    </source>
</reference>
<organism>
    <name type="scientific">Shewanella pealeana (strain ATCC 700345 / ANG-SQ1)</name>
    <dbReference type="NCBI Taxonomy" id="398579"/>
    <lineage>
        <taxon>Bacteria</taxon>
        <taxon>Pseudomonadati</taxon>
        <taxon>Pseudomonadota</taxon>
        <taxon>Gammaproteobacteria</taxon>
        <taxon>Alteromonadales</taxon>
        <taxon>Shewanellaceae</taxon>
        <taxon>Shewanella</taxon>
    </lineage>
</organism>